<organism>
    <name type="scientific">Oryza sativa subsp. japonica</name>
    <name type="common">Rice</name>
    <dbReference type="NCBI Taxonomy" id="39947"/>
    <lineage>
        <taxon>Eukaryota</taxon>
        <taxon>Viridiplantae</taxon>
        <taxon>Streptophyta</taxon>
        <taxon>Embryophyta</taxon>
        <taxon>Tracheophyta</taxon>
        <taxon>Spermatophyta</taxon>
        <taxon>Magnoliopsida</taxon>
        <taxon>Liliopsida</taxon>
        <taxon>Poales</taxon>
        <taxon>Poaceae</taxon>
        <taxon>BOP clade</taxon>
        <taxon>Oryzoideae</taxon>
        <taxon>Oryzeae</taxon>
        <taxon>Oryzinae</taxon>
        <taxon>Oryza</taxon>
        <taxon>Oryza sativa</taxon>
    </lineage>
</organism>
<proteinExistence type="inferred from homology"/>
<name>FTSH6_ORYSJ</name>
<protein>
    <recommendedName>
        <fullName>ATP-dependent zinc metalloprotease FTSH 6, chloroplastic</fullName>
        <shortName>OsFTSH6</shortName>
        <ecNumber>3.4.24.-</ecNumber>
    </recommendedName>
</protein>
<accession>Q67WJ2</accession>
<accession>A3B9W9</accession>
<gene>
    <name type="primary">FTSH6</name>
    <name type="ordered locus">Os06g0229066</name>
    <name type="ordered locus">LOC_Os06g12370</name>
    <name type="ORF">OsJ_019841</name>
    <name type="ORF">P0425F05.40</name>
    <name type="ORF">P0525F01.10</name>
</gene>
<dbReference type="EC" id="3.4.24.-"/>
<dbReference type="EMBL" id="AP003509">
    <property type="protein sequence ID" value="BAD37263.1"/>
    <property type="molecule type" value="Genomic_DNA"/>
</dbReference>
<dbReference type="EMBL" id="AP003569">
    <property type="protein sequence ID" value="BAD37477.1"/>
    <property type="molecule type" value="Genomic_DNA"/>
</dbReference>
<dbReference type="EMBL" id="AP014962">
    <property type="status" value="NOT_ANNOTATED_CDS"/>
    <property type="molecule type" value="Genomic_DNA"/>
</dbReference>
<dbReference type="EMBL" id="CM000143">
    <property type="protein sequence ID" value="EAZ36358.1"/>
    <property type="status" value="ALT_SEQ"/>
    <property type="molecule type" value="Genomic_DNA"/>
</dbReference>
<dbReference type="RefSeq" id="XP_015641788.1">
    <property type="nucleotide sequence ID" value="XM_015786302.1"/>
</dbReference>
<dbReference type="SMR" id="Q67WJ2"/>
<dbReference type="STRING" id="39947.Q67WJ2"/>
<dbReference type="MEROPS" id="M41.019"/>
<dbReference type="PaxDb" id="39947-Q67WJ2"/>
<dbReference type="eggNOG" id="KOG0731">
    <property type="taxonomic scope" value="Eukaryota"/>
</dbReference>
<dbReference type="HOGENOM" id="CLU_000688_21_16_1"/>
<dbReference type="InParanoid" id="Q67WJ2"/>
<dbReference type="OrthoDB" id="1413014at2759"/>
<dbReference type="Proteomes" id="UP000000763">
    <property type="component" value="Chromosome 6"/>
</dbReference>
<dbReference type="Proteomes" id="UP000007752">
    <property type="component" value="Chromosome 6"/>
</dbReference>
<dbReference type="Proteomes" id="UP000059680">
    <property type="component" value="Chromosome 6"/>
</dbReference>
<dbReference type="GO" id="GO:0009535">
    <property type="term" value="C:chloroplast thylakoid membrane"/>
    <property type="evidence" value="ECO:0000318"/>
    <property type="project" value="GO_Central"/>
</dbReference>
<dbReference type="GO" id="GO:0005524">
    <property type="term" value="F:ATP binding"/>
    <property type="evidence" value="ECO:0007669"/>
    <property type="project" value="UniProtKB-KW"/>
</dbReference>
<dbReference type="GO" id="GO:0016887">
    <property type="term" value="F:ATP hydrolysis activity"/>
    <property type="evidence" value="ECO:0007669"/>
    <property type="project" value="InterPro"/>
</dbReference>
<dbReference type="GO" id="GO:0004176">
    <property type="term" value="F:ATP-dependent peptidase activity"/>
    <property type="evidence" value="ECO:0000318"/>
    <property type="project" value="GO_Central"/>
</dbReference>
<dbReference type="GO" id="GO:0004222">
    <property type="term" value="F:metalloendopeptidase activity"/>
    <property type="evidence" value="ECO:0007669"/>
    <property type="project" value="InterPro"/>
</dbReference>
<dbReference type="GO" id="GO:0008270">
    <property type="term" value="F:zinc ion binding"/>
    <property type="evidence" value="ECO:0007669"/>
    <property type="project" value="InterPro"/>
</dbReference>
<dbReference type="GO" id="GO:0006508">
    <property type="term" value="P:proteolysis"/>
    <property type="evidence" value="ECO:0000318"/>
    <property type="project" value="GO_Central"/>
</dbReference>
<dbReference type="CDD" id="cd19501">
    <property type="entry name" value="RecA-like_FtsH"/>
    <property type="match status" value="1"/>
</dbReference>
<dbReference type="FunFam" id="1.10.8.60:FF:000001">
    <property type="entry name" value="ATP-dependent zinc metalloprotease FtsH"/>
    <property type="match status" value="1"/>
</dbReference>
<dbReference type="FunFam" id="3.40.50.300:FF:000001">
    <property type="entry name" value="ATP-dependent zinc metalloprotease FtsH"/>
    <property type="match status" value="1"/>
</dbReference>
<dbReference type="FunFam" id="1.20.58.760:FF:000035">
    <property type="entry name" value="ATP-dependent zinc metalloprotease FTSH 6 chloroplastic"/>
    <property type="match status" value="1"/>
</dbReference>
<dbReference type="FunFam" id="3.30.720.210:FF:000002">
    <property type="entry name" value="ATP-dependent zinc metalloprotease FTSH chloroplastic"/>
    <property type="match status" value="1"/>
</dbReference>
<dbReference type="Gene3D" id="1.10.8.60">
    <property type="match status" value="1"/>
</dbReference>
<dbReference type="Gene3D" id="3.30.720.210">
    <property type="match status" value="1"/>
</dbReference>
<dbReference type="Gene3D" id="3.40.50.300">
    <property type="entry name" value="P-loop containing nucleotide triphosphate hydrolases"/>
    <property type="match status" value="1"/>
</dbReference>
<dbReference type="Gene3D" id="1.20.58.760">
    <property type="entry name" value="Peptidase M41"/>
    <property type="match status" value="1"/>
</dbReference>
<dbReference type="HAMAP" id="MF_01458">
    <property type="entry name" value="FtsH"/>
    <property type="match status" value="1"/>
</dbReference>
<dbReference type="InterPro" id="IPR003593">
    <property type="entry name" value="AAA+_ATPase"/>
</dbReference>
<dbReference type="InterPro" id="IPR041569">
    <property type="entry name" value="AAA_lid_3"/>
</dbReference>
<dbReference type="InterPro" id="IPR003959">
    <property type="entry name" value="ATPase_AAA_core"/>
</dbReference>
<dbReference type="InterPro" id="IPR003960">
    <property type="entry name" value="ATPase_AAA_CS"/>
</dbReference>
<dbReference type="InterPro" id="IPR005936">
    <property type="entry name" value="FtsH"/>
</dbReference>
<dbReference type="InterPro" id="IPR027417">
    <property type="entry name" value="P-loop_NTPase"/>
</dbReference>
<dbReference type="InterPro" id="IPR011546">
    <property type="entry name" value="Pept_M41_FtsH_extracell"/>
</dbReference>
<dbReference type="InterPro" id="IPR000642">
    <property type="entry name" value="Peptidase_M41"/>
</dbReference>
<dbReference type="InterPro" id="IPR037219">
    <property type="entry name" value="Peptidase_M41-like"/>
</dbReference>
<dbReference type="InterPro" id="IPR006311">
    <property type="entry name" value="TAT_signal"/>
</dbReference>
<dbReference type="NCBIfam" id="TIGR01241">
    <property type="entry name" value="FtsH_fam"/>
    <property type="match status" value="1"/>
</dbReference>
<dbReference type="PANTHER" id="PTHR23076:SF118">
    <property type="entry name" value="ATP-DEPENDENT ZINC METALLOPROTEASE FTSH 6, CHLOROPLASTIC"/>
    <property type="match status" value="1"/>
</dbReference>
<dbReference type="PANTHER" id="PTHR23076">
    <property type="entry name" value="METALLOPROTEASE M41 FTSH"/>
    <property type="match status" value="1"/>
</dbReference>
<dbReference type="Pfam" id="PF00004">
    <property type="entry name" value="AAA"/>
    <property type="match status" value="1"/>
</dbReference>
<dbReference type="Pfam" id="PF17862">
    <property type="entry name" value="AAA_lid_3"/>
    <property type="match status" value="1"/>
</dbReference>
<dbReference type="Pfam" id="PF06480">
    <property type="entry name" value="FtsH_ext"/>
    <property type="match status" value="1"/>
</dbReference>
<dbReference type="Pfam" id="PF01434">
    <property type="entry name" value="Peptidase_M41"/>
    <property type="match status" value="1"/>
</dbReference>
<dbReference type="SMART" id="SM00382">
    <property type="entry name" value="AAA"/>
    <property type="match status" value="1"/>
</dbReference>
<dbReference type="SUPFAM" id="SSF140990">
    <property type="entry name" value="FtsH protease domain-like"/>
    <property type="match status" value="1"/>
</dbReference>
<dbReference type="SUPFAM" id="SSF52540">
    <property type="entry name" value="P-loop containing nucleoside triphosphate hydrolases"/>
    <property type="match status" value="1"/>
</dbReference>
<dbReference type="PROSITE" id="PS00674">
    <property type="entry name" value="AAA"/>
    <property type="match status" value="1"/>
</dbReference>
<dbReference type="PROSITE" id="PS51318">
    <property type="entry name" value="TAT"/>
    <property type="match status" value="1"/>
</dbReference>
<evidence type="ECO:0000250" key="1"/>
<evidence type="ECO:0000255" key="2"/>
<evidence type="ECO:0000256" key="3">
    <source>
        <dbReference type="SAM" id="MobiDB-lite"/>
    </source>
</evidence>
<evidence type="ECO:0000305" key="4"/>
<reference key="1">
    <citation type="journal article" date="2005" name="Nature">
        <title>The map-based sequence of the rice genome.</title>
        <authorList>
            <consortium name="International rice genome sequencing project (IRGSP)"/>
        </authorList>
    </citation>
    <scope>NUCLEOTIDE SEQUENCE [LARGE SCALE GENOMIC DNA]</scope>
    <source>
        <strain>cv. Nipponbare</strain>
    </source>
</reference>
<reference key="2">
    <citation type="journal article" date="2013" name="Rice">
        <title>Improvement of the Oryza sativa Nipponbare reference genome using next generation sequence and optical map data.</title>
        <authorList>
            <person name="Kawahara Y."/>
            <person name="de la Bastide M."/>
            <person name="Hamilton J.P."/>
            <person name="Kanamori H."/>
            <person name="McCombie W.R."/>
            <person name="Ouyang S."/>
            <person name="Schwartz D.C."/>
            <person name="Tanaka T."/>
            <person name="Wu J."/>
            <person name="Zhou S."/>
            <person name="Childs K.L."/>
            <person name="Davidson R.M."/>
            <person name="Lin H."/>
            <person name="Quesada-Ocampo L."/>
            <person name="Vaillancourt B."/>
            <person name="Sakai H."/>
            <person name="Lee S.S."/>
            <person name="Kim J."/>
            <person name="Numa H."/>
            <person name="Itoh T."/>
            <person name="Buell C.R."/>
            <person name="Matsumoto T."/>
        </authorList>
    </citation>
    <scope>GENOME REANNOTATION</scope>
    <source>
        <strain>cv. Nipponbare</strain>
    </source>
</reference>
<reference key="3">
    <citation type="journal article" date="2005" name="PLoS Biol.">
        <title>The genomes of Oryza sativa: a history of duplications.</title>
        <authorList>
            <person name="Yu J."/>
            <person name="Wang J."/>
            <person name="Lin W."/>
            <person name="Li S."/>
            <person name="Li H."/>
            <person name="Zhou J."/>
            <person name="Ni P."/>
            <person name="Dong W."/>
            <person name="Hu S."/>
            <person name="Zeng C."/>
            <person name="Zhang J."/>
            <person name="Zhang Y."/>
            <person name="Li R."/>
            <person name="Xu Z."/>
            <person name="Li S."/>
            <person name="Li X."/>
            <person name="Zheng H."/>
            <person name="Cong L."/>
            <person name="Lin L."/>
            <person name="Yin J."/>
            <person name="Geng J."/>
            <person name="Li G."/>
            <person name="Shi J."/>
            <person name="Liu J."/>
            <person name="Lv H."/>
            <person name="Li J."/>
            <person name="Wang J."/>
            <person name="Deng Y."/>
            <person name="Ran L."/>
            <person name="Shi X."/>
            <person name="Wang X."/>
            <person name="Wu Q."/>
            <person name="Li C."/>
            <person name="Ren X."/>
            <person name="Wang J."/>
            <person name="Wang X."/>
            <person name="Li D."/>
            <person name="Liu D."/>
            <person name="Zhang X."/>
            <person name="Ji Z."/>
            <person name="Zhao W."/>
            <person name="Sun Y."/>
            <person name="Zhang Z."/>
            <person name="Bao J."/>
            <person name="Han Y."/>
            <person name="Dong L."/>
            <person name="Ji J."/>
            <person name="Chen P."/>
            <person name="Wu S."/>
            <person name="Liu J."/>
            <person name="Xiao Y."/>
            <person name="Bu D."/>
            <person name="Tan J."/>
            <person name="Yang L."/>
            <person name="Ye C."/>
            <person name="Zhang J."/>
            <person name="Xu J."/>
            <person name="Zhou Y."/>
            <person name="Yu Y."/>
            <person name="Zhang B."/>
            <person name="Zhuang S."/>
            <person name="Wei H."/>
            <person name="Liu B."/>
            <person name="Lei M."/>
            <person name="Yu H."/>
            <person name="Li Y."/>
            <person name="Xu H."/>
            <person name="Wei S."/>
            <person name="He X."/>
            <person name="Fang L."/>
            <person name="Zhang Z."/>
            <person name="Zhang Y."/>
            <person name="Huang X."/>
            <person name="Su Z."/>
            <person name="Tong W."/>
            <person name="Li J."/>
            <person name="Tong Z."/>
            <person name="Li S."/>
            <person name="Ye J."/>
            <person name="Wang L."/>
            <person name="Fang L."/>
            <person name="Lei T."/>
            <person name="Chen C.-S."/>
            <person name="Chen H.-C."/>
            <person name="Xu Z."/>
            <person name="Li H."/>
            <person name="Huang H."/>
            <person name="Zhang F."/>
            <person name="Xu H."/>
            <person name="Li N."/>
            <person name="Zhao C."/>
            <person name="Li S."/>
            <person name="Dong L."/>
            <person name="Huang Y."/>
            <person name="Li L."/>
            <person name="Xi Y."/>
            <person name="Qi Q."/>
            <person name="Li W."/>
            <person name="Zhang B."/>
            <person name="Hu W."/>
            <person name="Zhang Y."/>
            <person name="Tian X."/>
            <person name="Jiao Y."/>
            <person name="Liang X."/>
            <person name="Jin J."/>
            <person name="Gao L."/>
            <person name="Zheng W."/>
            <person name="Hao B."/>
            <person name="Liu S.-M."/>
            <person name="Wang W."/>
            <person name="Yuan L."/>
            <person name="Cao M."/>
            <person name="McDermott J."/>
            <person name="Samudrala R."/>
            <person name="Wang J."/>
            <person name="Wong G.K.-S."/>
            <person name="Yang H."/>
        </authorList>
    </citation>
    <scope>NUCLEOTIDE SEQUENCE [LARGE SCALE GENOMIC DNA]</scope>
    <source>
        <strain>cv. Nipponbare</strain>
    </source>
</reference>
<reference key="4">
    <citation type="journal article" date="2005" name="Plant Physiol.">
        <title>Functional redundancy of AtFtsH metalloproteases in thylakoid membrane complexes.</title>
        <authorList>
            <person name="Yu F."/>
            <person name="Park S."/>
            <person name="Rodermel S.R."/>
        </authorList>
    </citation>
    <scope>GENE FAMILY</scope>
    <scope>NOMENCLATURE</scope>
</reference>
<keyword id="KW-0067">ATP-binding</keyword>
<keyword id="KW-0150">Chloroplast</keyword>
<keyword id="KW-0378">Hydrolase</keyword>
<keyword id="KW-0472">Membrane</keyword>
<keyword id="KW-0479">Metal-binding</keyword>
<keyword id="KW-0482">Metalloprotease</keyword>
<keyword id="KW-0547">Nucleotide-binding</keyword>
<keyword id="KW-0934">Plastid</keyword>
<keyword id="KW-0645">Protease</keyword>
<keyword id="KW-1185">Reference proteome</keyword>
<keyword id="KW-0793">Thylakoid</keyword>
<keyword id="KW-0809">Transit peptide</keyword>
<keyword id="KW-0812">Transmembrane</keyword>
<keyword id="KW-1133">Transmembrane helix</keyword>
<keyword id="KW-0862">Zinc</keyword>
<comment type="function">
    <text evidence="1">Probable ATP-dependent zinc metallopeptidase.</text>
</comment>
<comment type="cofactor">
    <cofactor evidence="1">
        <name>Zn(2+)</name>
        <dbReference type="ChEBI" id="CHEBI:29105"/>
    </cofactor>
    <text evidence="1">Binds 1 zinc ion per subunit.</text>
</comment>
<comment type="subcellular location">
    <subcellularLocation>
        <location evidence="1">Plastid</location>
        <location evidence="1">Chloroplast thylakoid membrane</location>
        <topology evidence="1">Single-pass membrane protein</topology>
        <orientation evidence="1">Stromal side</orientation>
    </subcellularLocation>
</comment>
<comment type="similarity">
    <text evidence="4">In the N-terminal section; belongs to the AAA ATPase family.</text>
</comment>
<comment type="similarity">
    <text evidence="4">In the C-terminal section; belongs to the peptidase M41 family.</text>
</comment>
<comment type="sequence caution" evidence="4">
    <conflict type="erroneous gene model prediction">
        <sequence resource="EMBL-CDS" id="EAZ36358"/>
    </conflict>
</comment>
<feature type="transit peptide" description="Chloroplast" evidence="2">
    <location>
        <begin position="1"/>
        <end position="75"/>
    </location>
</feature>
<feature type="transit peptide" description="Thylakoid" evidence="2">
    <location>
        <begin position="76"/>
        <end status="unknown"/>
    </location>
</feature>
<feature type="chain" id="PRO_0000341342" description="ATP-dependent zinc metalloprotease FTSH 6, chloroplastic">
    <location>
        <begin status="unknown"/>
        <end position="686"/>
    </location>
</feature>
<feature type="transmembrane region" description="Helical" evidence="2">
    <location>
        <begin position="164"/>
        <end position="184"/>
    </location>
</feature>
<feature type="region of interest" description="Disordered" evidence="3">
    <location>
        <begin position="1"/>
        <end position="52"/>
    </location>
</feature>
<feature type="compositionally biased region" description="Polar residues" evidence="3">
    <location>
        <begin position="1"/>
        <end position="14"/>
    </location>
</feature>
<feature type="compositionally biased region" description="Low complexity" evidence="3">
    <location>
        <begin position="39"/>
        <end position="52"/>
    </location>
</feature>
<feature type="active site" evidence="1">
    <location>
        <position position="484"/>
    </location>
</feature>
<feature type="binding site" evidence="2">
    <location>
        <begin position="261"/>
        <end position="268"/>
    </location>
    <ligand>
        <name>ATP</name>
        <dbReference type="ChEBI" id="CHEBI:30616"/>
    </ligand>
</feature>
<feature type="binding site" evidence="1">
    <location>
        <position position="483"/>
    </location>
    <ligand>
        <name>Zn(2+)</name>
        <dbReference type="ChEBI" id="CHEBI:29105"/>
        <note>catalytic</note>
    </ligand>
</feature>
<feature type="binding site" evidence="1">
    <location>
        <position position="487"/>
    </location>
    <ligand>
        <name>Zn(2+)</name>
        <dbReference type="ChEBI" id="CHEBI:29105"/>
        <note>catalytic</note>
    </ligand>
</feature>
<feature type="binding site" evidence="1">
    <location>
        <position position="562"/>
    </location>
    <ligand>
        <name>Zn(2+)</name>
        <dbReference type="ChEBI" id="CHEBI:29105"/>
        <note>catalytic</note>
    </ligand>
</feature>
<feature type="sequence conflict" description="In Ref. 3; EAZ36358." evidence="4" ref="3">
    <original>R</original>
    <variation>P</variation>
    <location>
        <position position="512"/>
    </location>
</feature>
<feature type="sequence conflict" description="In Ref. 3; EAZ36358." evidence="4" ref="3">
    <original>E</original>
    <variation>K</variation>
    <location>
        <position position="521"/>
    </location>
</feature>
<sequence length="686" mass="72624">MSPTAMSLTTTTSRLPICRAQGGGVAKEKRTTPPPAKITPPSSSSSEAAGLSRRRLLQSAGLGLGLGLTAARPARAEATAPEEVTSNRMSYSRFLEYLDAGAVKKVDFFENGTVAVAEVDDAAALSRVHRVKVQLPGLPAELVRKLRDKGVDFAAHPVEPSAGVMLLDLLVNFGFPLLFVASLLWRSPTMNNPGGGPSLPFGLGKSKAKFQMEPKTGVTFDDVAGVDEAKQDFQEIVQFLKFPEKFTAVGARTPKGVLLVGPPGTGKTLLAKAIAGEAGVPFFSLSGSEFIEMFVGVGASRVRDLFDRAKASAPCLVFIDEIDAVGRQRGAGIGGGNDEREQTLNQLLTEMDGFGGGDGGVVVIAATNRPEILDAALLRPGRFDRRVSVGLPDVRGREEILLVHGANKRLDPGVSLAVVAMRTPGFSGADLANLMNEAAILAGRRGKDRITVSEIDDSIDRIVAGLEGTSMTDGKSKMLVAYHEIGHAVCATLTAGHDEVQKVTLIPRGQARGLTWFLPGEEDPALVSRQQIFAGIVGGLGGRAAEEVVFGEPEVTTGAAGDLQQVTRVARRMVTAFGMSEIGPWALAEPAAQGGDVVLRMLARSSMSERLAADIDAAVRTIVDEAYEVAKAHVRRNRAAIDQLVDVLMEKETLGGDEFRAILSEHVDIGKERRETAARTQQLATA</sequence>